<proteinExistence type="uncertain"/>
<accession>P38214</accession>
<dbReference type="EMBL" id="Z35881">
    <property type="protein sequence ID" value="CAA84950.1"/>
    <property type="molecule type" value="Genomic_DNA"/>
</dbReference>
<dbReference type="EMBL" id="AY558551">
    <property type="protein sequence ID" value="AAS56877.1"/>
    <property type="molecule type" value="Genomic_DNA"/>
</dbReference>
<dbReference type="PIR" id="S45865">
    <property type="entry name" value="S45865"/>
</dbReference>
<dbReference type="DIP" id="DIP-3966N"/>
<dbReference type="STRING" id="4932.YBR012C"/>
<dbReference type="PaxDb" id="4932-YBR012C"/>
<dbReference type="EnsemblFungi" id="YBR012C_mRNA">
    <property type="protein sequence ID" value="YBR012C"/>
    <property type="gene ID" value="YBR012C"/>
</dbReference>
<dbReference type="AGR" id="SGD:S000000216"/>
<dbReference type="SGD" id="S000000216">
    <property type="gene designation" value="YBR012C"/>
</dbReference>
<dbReference type="eggNOG" id="ENOG502SC5E">
    <property type="taxonomic scope" value="Eukaryota"/>
</dbReference>
<dbReference type="HOGENOM" id="CLU_1846700_0_0_1"/>
<dbReference type="OMA" id="VTNECAV"/>
<evidence type="ECO:0000269" key="1">
    <source>
    </source>
</evidence>
<evidence type="ECO:0000305" key="2">
    <source>
    </source>
</evidence>
<comment type="induction">
    <text evidence="1">Induced by the iron-regulated transcriptional activator AFT2.</text>
</comment>
<comment type="caution">
    <text evidence="2">Product of a dubious gene prediction unlikely to encode a functional protein. Because of that it is not part of the S.cerevisiae S288c complete/reference proteome set.</text>
</comment>
<organism>
    <name type="scientific">Saccharomyces cerevisiae (strain ATCC 204508 / S288c)</name>
    <name type="common">Baker's yeast</name>
    <dbReference type="NCBI Taxonomy" id="559292"/>
    <lineage>
        <taxon>Eukaryota</taxon>
        <taxon>Fungi</taxon>
        <taxon>Dikarya</taxon>
        <taxon>Ascomycota</taxon>
        <taxon>Saccharomycotina</taxon>
        <taxon>Saccharomycetes</taxon>
        <taxon>Saccharomycetales</taxon>
        <taxon>Saccharomycetaceae</taxon>
        <taxon>Saccharomyces</taxon>
    </lineage>
</organism>
<gene>
    <name type="ordered locus">YBR012C</name>
    <name type="ORF">YBR0205</name>
</gene>
<name>YBM2_YEAST</name>
<sequence>MNKLKVSQNNYLQRSDFYKFERNGTEWEYIFASNSACLDYNNNTAVNNDIISSLNYCISDDRYYETAAMCVVLKLSQDCSFDVRLQRSGNGPYKNIWDMPCGELQQHIGYKNGICYNSENTVLSAVGVEHRYHKSVSRL</sequence>
<protein>
    <recommendedName>
        <fullName>Putative uncharacterized protein YBR012C</fullName>
    </recommendedName>
</protein>
<reference key="1">
    <citation type="journal article" date="1994" name="EMBO J.">
        <title>Complete DNA sequence of yeast chromosome II.</title>
        <authorList>
            <person name="Feldmann H."/>
            <person name="Aigle M."/>
            <person name="Aljinovic G."/>
            <person name="Andre B."/>
            <person name="Baclet M.C."/>
            <person name="Barthe C."/>
            <person name="Baur A."/>
            <person name="Becam A.-M."/>
            <person name="Biteau N."/>
            <person name="Boles E."/>
            <person name="Brandt T."/>
            <person name="Brendel M."/>
            <person name="Brueckner M."/>
            <person name="Bussereau F."/>
            <person name="Christiansen C."/>
            <person name="Contreras R."/>
            <person name="Crouzet M."/>
            <person name="Cziepluch C."/>
            <person name="Demolis N."/>
            <person name="Delaveau T."/>
            <person name="Doignon F."/>
            <person name="Domdey H."/>
            <person name="Duesterhus S."/>
            <person name="Dubois E."/>
            <person name="Dujon B."/>
            <person name="El Bakkoury M."/>
            <person name="Entian K.-D."/>
            <person name="Feuermann M."/>
            <person name="Fiers W."/>
            <person name="Fobo G.M."/>
            <person name="Fritz C."/>
            <person name="Gassenhuber J."/>
            <person name="Glansdorff N."/>
            <person name="Goffeau A."/>
            <person name="Grivell L.A."/>
            <person name="de Haan M."/>
            <person name="Hein C."/>
            <person name="Herbert C.J."/>
            <person name="Hollenberg C.P."/>
            <person name="Holmstroem K."/>
            <person name="Jacq C."/>
            <person name="Jacquet M."/>
            <person name="Jauniaux J.-C."/>
            <person name="Jonniaux J.-L."/>
            <person name="Kallesoee T."/>
            <person name="Kiesau P."/>
            <person name="Kirchrath L."/>
            <person name="Koetter P."/>
            <person name="Korol S."/>
            <person name="Liebl S."/>
            <person name="Logghe M."/>
            <person name="Lohan A.J.E."/>
            <person name="Louis E.J."/>
            <person name="Li Z.Y."/>
            <person name="Maat M.J."/>
            <person name="Mallet L."/>
            <person name="Mannhaupt G."/>
            <person name="Messenguy F."/>
            <person name="Miosga T."/>
            <person name="Molemans F."/>
            <person name="Mueller S."/>
            <person name="Nasr F."/>
            <person name="Obermaier B."/>
            <person name="Perea J."/>
            <person name="Pierard A."/>
            <person name="Piravandi E."/>
            <person name="Pohl F.M."/>
            <person name="Pohl T.M."/>
            <person name="Potier S."/>
            <person name="Proft M."/>
            <person name="Purnelle B."/>
            <person name="Ramezani Rad M."/>
            <person name="Rieger M."/>
            <person name="Rose M."/>
            <person name="Schaaff-Gerstenschlaeger I."/>
            <person name="Scherens B."/>
            <person name="Schwarzlose C."/>
            <person name="Skala J."/>
            <person name="Slonimski P.P."/>
            <person name="Smits P.H.M."/>
            <person name="Souciet J.-L."/>
            <person name="Steensma H.Y."/>
            <person name="Stucka R."/>
            <person name="Urrestarazu L.A."/>
            <person name="van der Aart Q.J.M."/>
            <person name="Van Dyck L."/>
            <person name="Vassarotti A."/>
            <person name="Vetter I."/>
            <person name="Vierendeels F."/>
            <person name="Vissers S."/>
            <person name="Wagner G."/>
            <person name="de Wergifosse P."/>
            <person name="Wolfe K.H."/>
            <person name="Zagulski M."/>
            <person name="Zimmermann F.K."/>
            <person name="Mewes H.-W."/>
            <person name="Kleine K."/>
        </authorList>
    </citation>
    <scope>NUCLEOTIDE SEQUENCE [LARGE SCALE GENOMIC DNA]</scope>
    <source>
        <strain>ATCC 204508 / S288c</strain>
    </source>
</reference>
<reference key="2">
    <citation type="journal article" date="2014" name="G3 (Bethesda)">
        <title>The reference genome sequence of Saccharomyces cerevisiae: Then and now.</title>
        <authorList>
            <person name="Engel S.R."/>
            <person name="Dietrich F.S."/>
            <person name="Fisk D.G."/>
            <person name="Binkley G."/>
            <person name="Balakrishnan R."/>
            <person name="Costanzo M.C."/>
            <person name="Dwight S.S."/>
            <person name="Hitz B.C."/>
            <person name="Karra K."/>
            <person name="Nash R.S."/>
            <person name="Weng S."/>
            <person name="Wong E.D."/>
            <person name="Lloyd P."/>
            <person name="Skrzypek M.S."/>
            <person name="Miyasato S.R."/>
            <person name="Simison M."/>
            <person name="Cherry J.M."/>
        </authorList>
    </citation>
    <scope>GENOME REANNOTATION</scope>
    <source>
        <strain>ATCC 204508 / S288c</strain>
    </source>
</reference>
<reference key="3">
    <citation type="journal article" date="2007" name="Genome Res.">
        <title>Approaching a complete repository of sequence-verified protein-encoding clones for Saccharomyces cerevisiae.</title>
        <authorList>
            <person name="Hu Y."/>
            <person name="Rolfs A."/>
            <person name="Bhullar B."/>
            <person name="Murthy T.V.S."/>
            <person name="Zhu C."/>
            <person name="Berger M.F."/>
            <person name="Camargo A.A."/>
            <person name="Kelley F."/>
            <person name="McCarron S."/>
            <person name="Jepson D."/>
            <person name="Richardson A."/>
            <person name="Raphael J."/>
            <person name="Moreira D."/>
            <person name="Taycher E."/>
            <person name="Zuo D."/>
            <person name="Mohr S."/>
            <person name="Kane M.F."/>
            <person name="Williamson J."/>
            <person name="Simpson A.J.G."/>
            <person name="Bulyk M.L."/>
            <person name="Harlow E."/>
            <person name="Marsischky G."/>
            <person name="Kolodner R.D."/>
            <person name="LaBaer J."/>
        </authorList>
    </citation>
    <scope>NUCLEOTIDE SEQUENCE [GENOMIC DNA]</scope>
    <source>
        <strain>ATCC 204508 / S288c</strain>
    </source>
</reference>
<reference key="4">
    <citation type="journal article" date="2003" name="J. Biol. Chem.">
        <title>Aft1p and Aft2p mediate iron-responsive gene expression in yeast through related promoter elements.</title>
        <authorList>
            <person name="Rutherford J.C."/>
            <person name="Jaron S."/>
            <person name="Winge D.R."/>
        </authorList>
    </citation>
    <scope>INDUCTION</scope>
</reference>
<feature type="chain" id="PRO_0000202468" description="Putative uncharacterized protein YBR012C">
    <location>
        <begin position="1"/>
        <end position="139"/>
    </location>
</feature>